<protein>
    <recommendedName>
        <fullName>Phage-like element PBSX protein XkdC</fullName>
    </recommendedName>
</protein>
<gene>
    <name type="primary">xkdC</name>
    <name type="synonym">ykxC</name>
    <name type="ordered locus">BSU12530</name>
</gene>
<accession>P39782</accession>
<reference key="1">
    <citation type="journal article" date="1994" name="J. Bacteriol.">
        <title>Genetic control of bacterial suicide: regulation of the induction of PBSX in Bacillus subtilis.</title>
        <authorList>
            <person name="McDonnell G.E."/>
            <person name="Wood H."/>
            <person name="Devine K.M."/>
            <person name="McConnell D.J."/>
        </authorList>
    </citation>
    <scope>NUCLEOTIDE SEQUENCE [GENOMIC DNA]</scope>
    <source>
        <strain>168 / SO113</strain>
    </source>
</reference>
<reference key="2">
    <citation type="submission" date="1996-03" db="EMBL/GenBank/DDBJ databases">
        <authorList>
            <person name="Krogh S."/>
            <person name="O'Reilly M."/>
            <person name="Nolan N."/>
            <person name="Devine K.M."/>
        </authorList>
    </citation>
    <scope>NUCLEOTIDE SEQUENCE [GENOMIC DNA]</scope>
    <source>
        <strain>168</strain>
    </source>
</reference>
<reference key="3">
    <citation type="journal article" date="1997" name="Nature">
        <title>The complete genome sequence of the Gram-positive bacterium Bacillus subtilis.</title>
        <authorList>
            <person name="Kunst F."/>
            <person name="Ogasawara N."/>
            <person name="Moszer I."/>
            <person name="Albertini A.M."/>
            <person name="Alloni G."/>
            <person name="Azevedo V."/>
            <person name="Bertero M.G."/>
            <person name="Bessieres P."/>
            <person name="Bolotin A."/>
            <person name="Borchert S."/>
            <person name="Borriss R."/>
            <person name="Boursier L."/>
            <person name="Brans A."/>
            <person name="Braun M."/>
            <person name="Brignell S.C."/>
            <person name="Bron S."/>
            <person name="Brouillet S."/>
            <person name="Bruschi C.V."/>
            <person name="Caldwell B."/>
            <person name="Capuano V."/>
            <person name="Carter N.M."/>
            <person name="Choi S.-K."/>
            <person name="Codani J.-J."/>
            <person name="Connerton I.F."/>
            <person name="Cummings N.J."/>
            <person name="Daniel R.A."/>
            <person name="Denizot F."/>
            <person name="Devine K.M."/>
            <person name="Duesterhoeft A."/>
            <person name="Ehrlich S.D."/>
            <person name="Emmerson P.T."/>
            <person name="Entian K.-D."/>
            <person name="Errington J."/>
            <person name="Fabret C."/>
            <person name="Ferrari E."/>
            <person name="Foulger D."/>
            <person name="Fritz C."/>
            <person name="Fujita M."/>
            <person name="Fujita Y."/>
            <person name="Fuma S."/>
            <person name="Galizzi A."/>
            <person name="Galleron N."/>
            <person name="Ghim S.-Y."/>
            <person name="Glaser P."/>
            <person name="Goffeau A."/>
            <person name="Golightly E.J."/>
            <person name="Grandi G."/>
            <person name="Guiseppi G."/>
            <person name="Guy B.J."/>
            <person name="Haga K."/>
            <person name="Haiech J."/>
            <person name="Harwood C.R."/>
            <person name="Henaut A."/>
            <person name="Hilbert H."/>
            <person name="Holsappel S."/>
            <person name="Hosono S."/>
            <person name="Hullo M.-F."/>
            <person name="Itaya M."/>
            <person name="Jones L.-M."/>
            <person name="Joris B."/>
            <person name="Karamata D."/>
            <person name="Kasahara Y."/>
            <person name="Klaerr-Blanchard M."/>
            <person name="Klein C."/>
            <person name="Kobayashi Y."/>
            <person name="Koetter P."/>
            <person name="Koningstein G."/>
            <person name="Krogh S."/>
            <person name="Kumano M."/>
            <person name="Kurita K."/>
            <person name="Lapidus A."/>
            <person name="Lardinois S."/>
            <person name="Lauber J."/>
            <person name="Lazarevic V."/>
            <person name="Lee S.-M."/>
            <person name="Levine A."/>
            <person name="Liu H."/>
            <person name="Masuda S."/>
            <person name="Mauel C."/>
            <person name="Medigue C."/>
            <person name="Medina N."/>
            <person name="Mellado R.P."/>
            <person name="Mizuno M."/>
            <person name="Moestl D."/>
            <person name="Nakai S."/>
            <person name="Noback M."/>
            <person name="Noone D."/>
            <person name="O'Reilly M."/>
            <person name="Ogawa K."/>
            <person name="Ogiwara A."/>
            <person name="Oudega B."/>
            <person name="Park S.-H."/>
            <person name="Parro V."/>
            <person name="Pohl T.M."/>
            <person name="Portetelle D."/>
            <person name="Porwollik S."/>
            <person name="Prescott A.M."/>
            <person name="Presecan E."/>
            <person name="Pujic P."/>
            <person name="Purnelle B."/>
            <person name="Rapoport G."/>
            <person name="Rey M."/>
            <person name="Reynolds S."/>
            <person name="Rieger M."/>
            <person name="Rivolta C."/>
            <person name="Rocha E."/>
            <person name="Roche B."/>
            <person name="Rose M."/>
            <person name="Sadaie Y."/>
            <person name="Sato T."/>
            <person name="Scanlan E."/>
            <person name="Schleich S."/>
            <person name="Schroeter R."/>
            <person name="Scoffone F."/>
            <person name="Sekiguchi J."/>
            <person name="Sekowska A."/>
            <person name="Seror S.J."/>
            <person name="Serror P."/>
            <person name="Shin B.-S."/>
            <person name="Soldo B."/>
            <person name="Sorokin A."/>
            <person name="Tacconi E."/>
            <person name="Takagi T."/>
            <person name="Takahashi H."/>
            <person name="Takemaru K."/>
            <person name="Takeuchi M."/>
            <person name="Tamakoshi A."/>
            <person name="Tanaka T."/>
            <person name="Terpstra P."/>
            <person name="Tognoni A."/>
            <person name="Tosato V."/>
            <person name="Uchiyama S."/>
            <person name="Vandenbol M."/>
            <person name="Vannier F."/>
            <person name="Vassarotti A."/>
            <person name="Viari A."/>
            <person name="Wambutt R."/>
            <person name="Wedler E."/>
            <person name="Wedler H."/>
            <person name="Weitzenegger T."/>
            <person name="Winters P."/>
            <person name="Wipat A."/>
            <person name="Yamamoto H."/>
            <person name="Yamane K."/>
            <person name="Yasumoto K."/>
            <person name="Yata K."/>
            <person name="Yoshida K."/>
            <person name="Yoshikawa H.-F."/>
            <person name="Zumstein E."/>
            <person name="Yoshikawa H."/>
            <person name="Danchin A."/>
        </authorList>
    </citation>
    <scope>NUCLEOTIDE SEQUENCE [LARGE SCALE GENOMIC DNA]</scope>
    <source>
        <strain>168</strain>
    </source>
</reference>
<reference key="4">
    <citation type="journal article" date="2009" name="Microbiology">
        <title>From a consortium sequence to a unified sequence: the Bacillus subtilis 168 reference genome a decade later.</title>
        <authorList>
            <person name="Barbe V."/>
            <person name="Cruveiller S."/>
            <person name="Kunst F."/>
            <person name="Lenoble P."/>
            <person name="Meurice G."/>
            <person name="Sekowska A."/>
            <person name="Vallenet D."/>
            <person name="Wang T."/>
            <person name="Moszer I."/>
            <person name="Medigue C."/>
            <person name="Danchin A."/>
        </authorList>
    </citation>
    <scope>SEQUENCE REVISION TO 239</scope>
</reference>
<dbReference type="EMBL" id="Z34287">
    <property type="protein sequence ID" value="CAA84044.1"/>
    <property type="molecule type" value="Genomic_DNA"/>
</dbReference>
<dbReference type="EMBL" id="Z70177">
    <property type="protein sequence ID" value="CAA94054.1"/>
    <property type="molecule type" value="Genomic_DNA"/>
</dbReference>
<dbReference type="EMBL" id="AL009126">
    <property type="protein sequence ID" value="CAB13110.2"/>
    <property type="molecule type" value="Genomic_DNA"/>
</dbReference>
<dbReference type="PIR" id="I40411">
    <property type="entry name" value="I40411"/>
</dbReference>
<dbReference type="RefSeq" id="NP_389135.2">
    <property type="nucleotide sequence ID" value="NC_000964.3"/>
</dbReference>
<dbReference type="RefSeq" id="WP_010886492.1">
    <property type="nucleotide sequence ID" value="NZ_OZ025638.1"/>
</dbReference>
<dbReference type="SMR" id="P39782"/>
<dbReference type="FunCoup" id="P39782">
    <property type="interactions" value="150"/>
</dbReference>
<dbReference type="IntAct" id="P39782">
    <property type="interactions" value="1"/>
</dbReference>
<dbReference type="STRING" id="224308.BSU12530"/>
<dbReference type="PaxDb" id="224308-BSU12530"/>
<dbReference type="EnsemblBacteria" id="CAB13110">
    <property type="protein sequence ID" value="CAB13110"/>
    <property type="gene ID" value="BSU_12530"/>
</dbReference>
<dbReference type="GeneID" id="939841"/>
<dbReference type="KEGG" id="bsu:BSU12530"/>
<dbReference type="PATRIC" id="fig|224308.43.peg.1317"/>
<dbReference type="eggNOG" id="COG1484">
    <property type="taxonomic scope" value="Bacteria"/>
</dbReference>
<dbReference type="InParanoid" id="P39782"/>
<dbReference type="OrthoDB" id="1655960at2"/>
<dbReference type="PhylomeDB" id="P39782"/>
<dbReference type="BioCyc" id="BSUB:BSU12530-MONOMER"/>
<dbReference type="Proteomes" id="UP000001570">
    <property type="component" value="Chromosome"/>
</dbReference>
<dbReference type="GO" id="GO:0005524">
    <property type="term" value="F:ATP binding"/>
    <property type="evidence" value="ECO:0007669"/>
    <property type="project" value="UniProtKB-KW"/>
</dbReference>
<dbReference type="GO" id="GO:0016887">
    <property type="term" value="F:ATP hydrolysis activity"/>
    <property type="evidence" value="ECO:0007669"/>
    <property type="project" value="InterPro"/>
</dbReference>
<dbReference type="GO" id="GO:0006260">
    <property type="term" value="P:DNA replication"/>
    <property type="evidence" value="ECO:0000318"/>
    <property type="project" value="GO_Central"/>
</dbReference>
<dbReference type="CDD" id="cd00009">
    <property type="entry name" value="AAA"/>
    <property type="match status" value="1"/>
</dbReference>
<dbReference type="FunFam" id="3.40.50.300:FF:002497">
    <property type="entry name" value="DNA replication protein"/>
    <property type="match status" value="1"/>
</dbReference>
<dbReference type="Gene3D" id="3.40.50.300">
    <property type="entry name" value="P-loop containing nucleotide triphosphate hydrolases"/>
    <property type="match status" value="1"/>
</dbReference>
<dbReference type="InterPro" id="IPR003593">
    <property type="entry name" value="AAA+_ATPase"/>
</dbReference>
<dbReference type="InterPro" id="IPR002611">
    <property type="entry name" value="IstB_ATP-bd"/>
</dbReference>
<dbReference type="InterPro" id="IPR027417">
    <property type="entry name" value="P-loop_NTPase"/>
</dbReference>
<dbReference type="NCBIfam" id="NF005378">
    <property type="entry name" value="PRK06921.1"/>
    <property type="match status" value="1"/>
</dbReference>
<dbReference type="PANTHER" id="PTHR30050">
    <property type="entry name" value="CHROMOSOMAL REPLICATION INITIATOR PROTEIN DNAA"/>
    <property type="match status" value="1"/>
</dbReference>
<dbReference type="PANTHER" id="PTHR30050:SF10">
    <property type="entry name" value="PHAGE-LIKE ELEMENT PBSX PROTEIN XKDC"/>
    <property type="match status" value="1"/>
</dbReference>
<dbReference type="Pfam" id="PF01695">
    <property type="entry name" value="IstB_IS21"/>
    <property type="match status" value="1"/>
</dbReference>
<dbReference type="SMART" id="SM00382">
    <property type="entry name" value="AAA"/>
    <property type="match status" value="1"/>
</dbReference>
<dbReference type="SUPFAM" id="SSF52540">
    <property type="entry name" value="P-loop containing nucleoside triphosphate hydrolases"/>
    <property type="match status" value="1"/>
</dbReference>
<feature type="chain" id="PRO_0000066017" description="Phage-like element PBSX protein XkdC">
    <location>
        <begin position="1"/>
        <end position="266"/>
    </location>
</feature>
<feature type="binding site" evidence="1">
    <location>
        <begin position="124"/>
        <end position="131"/>
    </location>
    <ligand>
        <name>ATP</name>
        <dbReference type="ChEBI" id="CHEBI:30616"/>
    </ligand>
</feature>
<feature type="sequence conflict" description="In Ref. 2; CAA94054." evidence="2" ref="2">
    <original>R</original>
    <variation>K</variation>
    <location>
        <position position="239"/>
    </location>
</feature>
<sequence>MTKRTIEQILDELRRGRRPLLADKPAESDASRYDCLRCKDQGGYLVRQNGLEVWTMCSCMAERKVKRLLGASEITHAFRQLGFKEFRTEGKPQAIKDAFECTKEYVADYEQIKDCRKNSIALLGQPGSGKTHLLTAAANELMRTCYVPVIYFPFVEGFTDLKNDFALLEAKLNRMKQADVLFIDDLFKPVNGKPRATDWQLEQMYSVLNYRYLNHKPILLSSELTIEGLVRVDEALGTRIYEMCSDYLVIIKGAAYELNHRLEGVR</sequence>
<keyword id="KW-0067">ATP-binding</keyword>
<keyword id="KW-0547">Nucleotide-binding</keyword>
<keyword id="KW-1185">Reference proteome</keyword>
<proteinExistence type="predicted"/>
<comment type="function">
    <text>May function as a transcriptional antiterminator.</text>
</comment>
<comment type="similarity">
    <text evidence="2">To B.subtilis YqaM.</text>
</comment>
<organism>
    <name type="scientific">Bacillus subtilis (strain 168)</name>
    <dbReference type="NCBI Taxonomy" id="224308"/>
    <lineage>
        <taxon>Bacteria</taxon>
        <taxon>Bacillati</taxon>
        <taxon>Bacillota</taxon>
        <taxon>Bacilli</taxon>
        <taxon>Bacillales</taxon>
        <taxon>Bacillaceae</taxon>
        <taxon>Bacillus</taxon>
    </lineage>
</organism>
<name>XKDC_BACSU</name>
<evidence type="ECO:0000255" key="1"/>
<evidence type="ECO:0000305" key="2"/>